<gene>
    <name type="ORF">GA18415</name>
</gene>
<reference key="1">
    <citation type="journal article" date="2005" name="Genome Res.">
        <title>Comparative genome sequencing of Drosophila pseudoobscura: chromosomal, gene, and cis-element evolution.</title>
        <authorList>
            <person name="Richards S."/>
            <person name="Liu Y."/>
            <person name="Bettencourt B.R."/>
            <person name="Hradecky P."/>
            <person name="Letovsky S."/>
            <person name="Nielsen R."/>
            <person name="Thornton K."/>
            <person name="Hubisz M.J."/>
            <person name="Chen R."/>
            <person name="Meisel R.P."/>
            <person name="Couronne O."/>
            <person name="Hua S."/>
            <person name="Smith M.A."/>
            <person name="Zhang P."/>
            <person name="Liu J."/>
            <person name="Bussemaker H.J."/>
            <person name="van Batenburg M.F."/>
            <person name="Howells S.L."/>
            <person name="Scherer S.E."/>
            <person name="Sodergren E."/>
            <person name="Matthews B.B."/>
            <person name="Crosby M.A."/>
            <person name="Schroeder A.J."/>
            <person name="Ortiz-Barrientos D."/>
            <person name="Rives C.M."/>
            <person name="Metzker M.L."/>
            <person name="Muzny D.M."/>
            <person name="Scott G."/>
            <person name="Steffen D."/>
            <person name="Wheeler D.A."/>
            <person name="Worley K.C."/>
            <person name="Havlak P."/>
            <person name="Durbin K.J."/>
            <person name="Egan A."/>
            <person name="Gill R."/>
            <person name="Hume J."/>
            <person name="Morgan M.B."/>
            <person name="Miner G."/>
            <person name="Hamilton C."/>
            <person name="Huang Y."/>
            <person name="Waldron L."/>
            <person name="Verduzco D."/>
            <person name="Clerc-Blankenburg K.P."/>
            <person name="Dubchak I."/>
            <person name="Noor M.A.F."/>
            <person name="Anderson W."/>
            <person name="White K.P."/>
            <person name="Clark A.G."/>
            <person name="Schaeffer S.W."/>
            <person name="Gelbart W.M."/>
            <person name="Weinstock G.M."/>
            <person name="Gibbs R.A."/>
        </authorList>
    </citation>
    <scope>NUCLEOTIDE SEQUENCE [LARGE SCALE GENOMIC DNA]</scope>
    <source>
        <strain>MV2-25 / Tucson 14011-0121.94</strain>
    </source>
</reference>
<sequence>MLVPPDMLVAQTRMIYQMNRYCAERVQARMFKTSTAIREICKIVQDILKEVELQEPRFISSLVECNGRFEGVEVISPNEFEIVLYLNQMGVFNFVDDGTLPGCAVLKLSDGRKRSMSLWVEFITASGYLSSRKIRSRFQTLVAQACDKSMYRDMVKIIGDTTEVKLRIRERYVVQITPAFKCSGIWPRSAAHWPMPHIPWPHPNIVAEVKTEGFDLLSKDSAAMQNKNNNAASMEGDAWVLSFYEAENRLLQGGCRRRCLSMLKTLRDRHLELPGSPISAYHLKNLLLYECEKHPRDYEWDESCIADRINGIFLQLISCLQYRRCPHYFLPSLDMFKGKSPSALEQAAKQVWRLTREMLTNANAFEKL</sequence>
<accession>Q29H55</accession>
<organism>
    <name type="scientific">Drosophila pseudoobscura pseudoobscura</name>
    <name type="common">Fruit fly</name>
    <dbReference type="NCBI Taxonomy" id="46245"/>
    <lineage>
        <taxon>Eukaryota</taxon>
        <taxon>Metazoa</taxon>
        <taxon>Ecdysozoa</taxon>
        <taxon>Arthropoda</taxon>
        <taxon>Hexapoda</taxon>
        <taxon>Insecta</taxon>
        <taxon>Pterygota</taxon>
        <taxon>Neoptera</taxon>
        <taxon>Endopterygota</taxon>
        <taxon>Diptera</taxon>
        <taxon>Brachycera</taxon>
        <taxon>Muscomorpha</taxon>
        <taxon>Ephydroidea</taxon>
        <taxon>Drosophilidae</taxon>
        <taxon>Drosophila</taxon>
        <taxon>Sophophora</taxon>
    </lineage>
</organism>
<name>MB21L_DROPS</name>
<feature type="chain" id="PRO_0000312800" description="Protein mab-21-like">
    <location>
        <begin position="1"/>
        <end position="368"/>
    </location>
</feature>
<evidence type="ECO:0000305" key="1"/>
<protein>
    <recommendedName>
        <fullName>Protein mab-21-like</fullName>
    </recommendedName>
</protein>
<proteinExistence type="inferred from homology"/>
<comment type="similarity">
    <text evidence="1">Belongs to the mab-21 family.</text>
</comment>
<comment type="caution">
    <text evidence="1">It is uncertain whether Met-1 or Met-7 is the initiator.</text>
</comment>
<keyword id="KW-1185">Reference proteome</keyword>
<dbReference type="EMBL" id="CH379064">
    <property type="protein sequence ID" value="EAL31902.1"/>
    <property type="molecule type" value="Genomic_DNA"/>
</dbReference>
<dbReference type="SMR" id="Q29H55"/>
<dbReference type="FunCoup" id="Q29H55">
    <property type="interactions" value="134"/>
</dbReference>
<dbReference type="STRING" id="46245.Q29H55"/>
<dbReference type="EnsemblMetazoa" id="FBtr0273760">
    <property type="protein sequence ID" value="FBpp0272198"/>
    <property type="gene ID" value="FBgn0078417"/>
</dbReference>
<dbReference type="KEGG" id="dpo:5614322"/>
<dbReference type="eggNOG" id="KOG3963">
    <property type="taxonomic scope" value="Eukaryota"/>
</dbReference>
<dbReference type="HOGENOM" id="CLU_045315_0_0_1"/>
<dbReference type="InParanoid" id="Q29H55"/>
<dbReference type="OMA" id="WDESCIA"/>
<dbReference type="PhylomeDB" id="Q29H55"/>
<dbReference type="Proteomes" id="UP000001819">
    <property type="component" value="Chromosome X"/>
</dbReference>
<dbReference type="Bgee" id="FBgn0078417">
    <property type="expression patterns" value="Expressed in insect adult head"/>
</dbReference>
<dbReference type="FunFam" id="1.10.1410.40:FF:000002">
    <property type="entry name" value="protein mab-21-like 1"/>
    <property type="match status" value="1"/>
</dbReference>
<dbReference type="FunFam" id="3.30.460.90:FF:000001">
    <property type="entry name" value="protein mab-21-like 2"/>
    <property type="match status" value="1"/>
</dbReference>
<dbReference type="Gene3D" id="1.10.1410.40">
    <property type="match status" value="1"/>
</dbReference>
<dbReference type="Gene3D" id="3.30.460.90">
    <property type="match status" value="1"/>
</dbReference>
<dbReference type="InterPro" id="IPR046903">
    <property type="entry name" value="Mab-21-like_nuc_Trfase"/>
</dbReference>
<dbReference type="InterPro" id="IPR046906">
    <property type="entry name" value="Mab-21_HhH/H2TH-like"/>
</dbReference>
<dbReference type="InterPro" id="IPR024810">
    <property type="entry name" value="MAB21L/cGLR"/>
</dbReference>
<dbReference type="PANTHER" id="PTHR10656">
    <property type="entry name" value="CELL FATE DETERMINING PROTEIN MAB21-RELATED"/>
    <property type="match status" value="1"/>
</dbReference>
<dbReference type="PANTHER" id="PTHR10656:SF70">
    <property type="entry name" value="PROTEIN MAB-21-RELATED"/>
    <property type="match status" value="1"/>
</dbReference>
<dbReference type="Pfam" id="PF03281">
    <property type="entry name" value="Mab-21"/>
    <property type="match status" value="1"/>
</dbReference>
<dbReference type="Pfam" id="PF20266">
    <property type="entry name" value="Mab-21_C"/>
    <property type="match status" value="1"/>
</dbReference>
<dbReference type="SMART" id="SM01265">
    <property type="entry name" value="Mab-21"/>
    <property type="match status" value="1"/>
</dbReference>